<protein>
    <recommendedName>
        <fullName evidence="2">Translation initiation factor IF-2</fullName>
    </recommendedName>
</protein>
<feature type="chain" id="PRO_0000335477" description="Translation initiation factor IF-2">
    <location>
        <begin position="1"/>
        <end position="831"/>
    </location>
</feature>
<feature type="domain" description="tr-type G">
    <location>
        <begin position="330"/>
        <end position="500"/>
    </location>
</feature>
<feature type="region of interest" description="Disordered" evidence="3">
    <location>
        <begin position="1"/>
        <end position="236"/>
    </location>
</feature>
<feature type="region of interest" description="G1" evidence="1">
    <location>
        <begin position="339"/>
        <end position="346"/>
    </location>
</feature>
<feature type="region of interest" description="G2" evidence="1">
    <location>
        <begin position="364"/>
        <end position="368"/>
    </location>
</feature>
<feature type="region of interest" description="G3" evidence="1">
    <location>
        <begin position="386"/>
        <end position="389"/>
    </location>
</feature>
<feature type="region of interest" description="G4" evidence="1">
    <location>
        <begin position="440"/>
        <end position="443"/>
    </location>
</feature>
<feature type="region of interest" description="G5" evidence="1">
    <location>
        <begin position="476"/>
        <end position="478"/>
    </location>
</feature>
<feature type="compositionally biased region" description="Basic and acidic residues" evidence="3">
    <location>
        <begin position="1"/>
        <end position="11"/>
    </location>
</feature>
<feature type="compositionally biased region" description="Low complexity" evidence="3">
    <location>
        <begin position="22"/>
        <end position="31"/>
    </location>
</feature>
<feature type="compositionally biased region" description="Basic and acidic residues" evidence="3">
    <location>
        <begin position="49"/>
        <end position="150"/>
    </location>
</feature>
<feature type="compositionally biased region" description="Basic and acidic residues" evidence="3">
    <location>
        <begin position="157"/>
        <end position="166"/>
    </location>
</feature>
<feature type="compositionally biased region" description="Basic residues" evidence="3">
    <location>
        <begin position="190"/>
        <end position="200"/>
    </location>
</feature>
<feature type="compositionally biased region" description="Basic and acidic residues" evidence="3">
    <location>
        <begin position="201"/>
        <end position="225"/>
    </location>
</feature>
<feature type="binding site" evidence="2">
    <location>
        <begin position="339"/>
        <end position="346"/>
    </location>
    <ligand>
        <name>GTP</name>
        <dbReference type="ChEBI" id="CHEBI:37565"/>
    </ligand>
</feature>
<feature type="binding site" evidence="2">
    <location>
        <begin position="386"/>
        <end position="390"/>
    </location>
    <ligand>
        <name>GTP</name>
        <dbReference type="ChEBI" id="CHEBI:37565"/>
    </ligand>
</feature>
<feature type="binding site" evidence="2">
    <location>
        <begin position="440"/>
        <end position="443"/>
    </location>
    <ligand>
        <name>GTP</name>
        <dbReference type="ChEBI" id="CHEBI:37565"/>
    </ligand>
</feature>
<comment type="function">
    <text evidence="2">One of the essential components for the initiation of protein synthesis. Protects formylmethionyl-tRNA from spontaneous hydrolysis and promotes its binding to the 30S ribosomal subunits. Also involved in the hydrolysis of GTP during the formation of the 70S ribosomal complex.</text>
</comment>
<comment type="subcellular location">
    <subcellularLocation>
        <location evidence="2">Cytoplasm</location>
    </subcellularLocation>
</comment>
<comment type="similarity">
    <text evidence="2">Belongs to the TRAFAC class translation factor GTPase superfamily. Classic translation factor GTPase family. IF-2 subfamily.</text>
</comment>
<keyword id="KW-0963">Cytoplasm</keyword>
<keyword id="KW-0342">GTP-binding</keyword>
<keyword id="KW-0396">Initiation factor</keyword>
<keyword id="KW-0547">Nucleotide-binding</keyword>
<keyword id="KW-0648">Protein biosynthesis</keyword>
<proteinExistence type="inferred from homology"/>
<accession>B0UU13</accession>
<name>IF2_HISS2</name>
<dbReference type="EMBL" id="CP000947">
    <property type="protein sequence ID" value="ACA31021.1"/>
    <property type="molecule type" value="Genomic_DNA"/>
</dbReference>
<dbReference type="RefSeq" id="WP_012340449.1">
    <property type="nucleotide sequence ID" value="NC_010519.1"/>
</dbReference>
<dbReference type="SMR" id="B0UU13"/>
<dbReference type="STRING" id="228400.HSM_1290"/>
<dbReference type="GeneID" id="31487593"/>
<dbReference type="KEGG" id="hsm:HSM_1290"/>
<dbReference type="HOGENOM" id="CLU_006301_6_3_6"/>
<dbReference type="GO" id="GO:0005829">
    <property type="term" value="C:cytosol"/>
    <property type="evidence" value="ECO:0007669"/>
    <property type="project" value="TreeGrafter"/>
</dbReference>
<dbReference type="GO" id="GO:0005525">
    <property type="term" value="F:GTP binding"/>
    <property type="evidence" value="ECO:0007669"/>
    <property type="project" value="UniProtKB-KW"/>
</dbReference>
<dbReference type="GO" id="GO:0003924">
    <property type="term" value="F:GTPase activity"/>
    <property type="evidence" value="ECO:0007669"/>
    <property type="project" value="UniProtKB-UniRule"/>
</dbReference>
<dbReference type="GO" id="GO:0097216">
    <property type="term" value="F:guanosine tetraphosphate binding"/>
    <property type="evidence" value="ECO:0007669"/>
    <property type="project" value="UniProtKB-ARBA"/>
</dbReference>
<dbReference type="GO" id="GO:0003743">
    <property type="term" value="F:translation initiation factor activity"/>
    <property type="evidence" value="ECO:0007669"/>
    <property type="project" value="UniProtKB-UniRule"/>
</dbReference>
<dbReference type="CDD" id="cd01887">
    <property type="entry name" value="IF2_eIF5B"/>
    <property type="match status" value="1"/>
</dbReference>
<dbReference type="CDD" id="cd03702">
    <property type="entry name" value="IF2_mtIF2_II"/>
    <property type="match status" value="1"/>
</dbReference>
<dbReference type="CDD" id="cd03692">
    <property type="entry name" value="mtIF2_IVc"/>
    <property type="match status" value="1"/>
</dbReference>
<dbReference type="FunFam" id="2.40.30.10:FF:000007">
    <property type="entry name" value="Translation initiation factor IF-2"/>
    <property type="match status" value="1"/>
</dbReference>
<dbReference type="FunFam" id="2.40.30.10:FF:000008">
    <property type="entry name" value="Translation initiation factor IF-2"/>
    <property type="match status" value="1"/>
</dbReference>
<dbReference type="FunFam" id="3.40.50.10050:FF:000001">
    <property type="entry name" value="Translation initiation factor IF-2"/>
    <property type="match status" value="1"/>
</dbReference>
<dbReference type="FunFam" id="3.40.50.300:FF:000019">
    <property type="entry name" value="Translation initiation factor IF-2"/>
    <property type="match status" value="1"/>
</dbReference>
<dbReference type="Gene3D" id="3.40.50.300">
    <property type="entry name" value="P-loop containing nucleotide triphosphate hydrolases"/>
    <property type="match status" value="1"/>
</dbReference>
<dbReference type="Gene3D" id="2.40.30.10">
    <property type="entry name" value="Translation factors"/>
    <property type="match status" value="2"/>
</dbReference>
<dbReference type="Gene3D" id="3.40.50.10050">
    <property type="entry name" value="Translation initiation factor IF- 2, domain 3"/>
    <property type="match status" value="1"/>
</dbReference>
<dbReference type="HAMAP" id="MF_00100_B">
    <property type="entry name" value="IF_2_B"/>
    <property type="match status" value="1"/>
</dbReference>
<dbReference type="InterPro" id="IPR053905">
    <property type="entry name" value="EF-G-like_DII"/>
</dbReference>
<dbReference type="InterPro" id="IPR004161">
    <property type="entry name" value="EFTu-like_2"/>
</dbReference>
<dbReference type="InterPro" id="IPR013575">
    <property type="entry name" value="IF2_assoc_dom_bac"/>
</dbReference>
<dbReference type="InterPro" id="IPR044145">
    <property type="entry name" value="IF2_II"/>
</dbReference>
<dbReference type="InterPro" id="IPR006847">
    <property type="entry name" value="IF2_N"/>
</dbReference>
<dbReference type="InterPro" id="IPR027417">
    <property type="entry name" value="P-loop_NTPase"/>
</dbReference>
<dbReference type="InterPro" id="IPR005225">
    <property type="entry name" value="Small_GTP-bd"/>
</dbReference>
<dbReference type="InterPro" id="IPR000795">
    <property type="entry name" value="T_Tr_GTP-bd_dom"/>
</dbReference>
<dbReference type="InterPro" id="IPR000178">
    <property type="entry name" value="TF_IF2_bacterial-like"/>
</dbReference>
<dbReference type="InterPro" id="IPR015760">
    <property type="entry name" value="TIF_IF2"/>
</dbReference>
<dbReference type="InterPro" id="IPR023115">
    <property type="entry name" value="TIF_IF2_dom3"/>
</dbReference>
<dbReference type="InterPro" id="IPR036925">
    <property type="entry name" value="TIF_IF2_dom3_sf"/>
</dbReference>
<dbReference type="InterPro" id="IPR009000">
    <property type="entry name" value="Transl_B-barrel_sf"/>
</dbReference>
<dbReference type="NCBIfam" id="TIGR00487">
    <property type="entry name" value="IF-2"/>
    <property type="match status" value="1"/>
</dbReference>
<dbReference type="NCBIfam" id="TIGR00231">
    <property type="entry name" value="small_GTP"/>
    <property type="match status" value="1"/>
</dbReference>
<dbReference type="PANTHER" id="PTHR43381:SF5">
    <property type="entry name" value="TR-TYPE G DOMAIN-CONTAINING PROTEIN"/>
    <property type="match status" value="1"/>
</dbReference>
<dbReference type="PANTHER" id="PTHR43381">
    <property type="entry name" value="TRANSLATION INITIATION FACTOR IF-2-RELATED"/>
    <property type="match status" value="1"/>
</dbReference>
<dbReference type="Pfam" id="PF22042">
    <property type="entry name" value="EF-G_D2"/>
    <property type="match status" value="1"/>
</dbReference>
<dbReference type="Pfam" id="PF00009">
    <property type="entry name" value="GTP_EFTU"/>
    <property type="match status" value="1"/>
</dbReference>
<dbReference type="Pfam" id="PF03144">
    <property type="entry name" value="GTP_EFTU_D2"/>
    <property type="match status" value="1"/>
</dbReference>
<dbReference type="Pfam" id="PF11987">
    <property type="entry name" value="IF-2"/>
    <property type="match status" value="1"/>
</dbReference>
<dbReference type="Pfam" id="PF08364">
    <property type="entry name" value="IF2_assoc"/>
    <property type="match status" value="1"/>
</dbReference>
<dbReference type="Pfam" id="PF04760">
    <property type="entry name" value="IF2_N"/>
    <property type="match status" value="1"/>
</dbReference>
<dbReference type="SUPFAM" id="SSF52156">
    <property type="entry name" value="Initiation factor IF2/eIF5b, domain 3"/>
    <property type="match status" value="1"/>
</dbReference>
<dbReference type="SUPFAM" id="SSF52540">
    <property type="entry name" value="P-loop containing nucleoside triphosphate hydrolases"/>
    <property type="match status" value="1"/>
</dbReference>
<dbReference type="SUPFAM" id="SSF50447">
    <property type="entry name" value="Translation proteins"/>
    <property type="match status" value="2"/>
</dbReference>
<dbReference type="PROSITE" id="PS51722">
    <property type="entry name" value="G_TR_2"/>
    <property type="match status" value="1"/>
</dbReference>
<dbReference type="PROSITE" id="PS01176">
    <property type="entry name" value="IF2"/>
    <property type="match status" value="1"/>
</dbReference>
<sequence>MADEIKKENAPKKLSIQRRTKTTVSGTSTTGKSKEVQVEVRKKRTVTTDLERKAQEQAKLKAKEEAEKRAAEEKLAEKAKREAEKAKAEQIKIEKAKAEQAKASKKNVDVEKEKRRAEEAELRRKADELARQKAEEKAQKAAEEAKRYADFDDSDNDNGKLDDYSDYHLTSSYALEAENEEERRNENRGRSKNKVVKAKKGGRDDENGNKNERQSDRRNQKDVKGKGKHAKKASALQQAFTKPAQVAKADVVIGETITVAELAAKMAVKATEIIKTMMKMGEMVTINQVIDQDTAQLVAEEMGHKVILRKENELEEMVMEDRDVNAEKVHRAPVVTIMGHVDHGKTSLLDYIRKAKVAAGEAGGITQHIGAYHVETNDGKMITFLDTPGHAAFTSMRARGAKATDIVVLVVAADDGVMPQTIEAIQHAKAANAPLVVAVNKIDKPEANPDRVEQELLQHEVISEKFGGDVQFVPVSAKKGLGIDDLLEAILLQSEVLELTAVKDGMASGVVIESYLDKGRGPVATILVQSGTLNRGDIVLCGFEYGRVRAMRDENGKDIQSAGPSIPVEVLGLSGVPAAGDEATVVRDEKKAREVALYRQGKFREVKLARQQKAKLENMFSNMAEGDVAELNVIVKADVQGSVEAIVQALHELSTAEVKVKVVGSGVGGITETDATLAAASNAIMVGFNVRADATARRVIENENIDLRYYSIIYELLNEIKAAMSGMLQPEFKQEIIGLAEVRDVFRHPKFGAIAGCMVTEGLVKRNNPIRVLRDNVVIFEGELESLRRFKDDVSEVRSGMECGIGVKNYNDVKVGDQIEVFEVVEVKRAI</sequence>
<organism>
    <name type="scientific">Histophilus somni (strain 2336)</name>
    <name type="common">Haemophilus somnus</name>
    <dbReference type="NCBI Taxonomy" id="228400"/>
    <lineage>
        <taxon>Bacteria</taxon>
        <taxon>Pseudomonadati</taxon>
        <taxon>Pseudomonadota</taxon>
        <taxon>Gammaproteobacteria</taxon>
        <taxon>Pasteurellales</taxon>
        <taxon>Pasteurellaceae</taxon>
        <taxon>Histophilus</taxon>
    </lineage>
</organism>
<evidence type="ECO:0000250" key="1"/>
<evidence type="ECO:0000255" key="2">
    <source>
        <dbReference type="HAMAP-Rule" id="MF_00100"/>
    </source>
</evidence>
<evidence type="ECO:0000256" key="3">
    <source>
        <dbReference type="SAM" id="MobiDB-lite"/>
    </source>
</evidence>
<reference key="1">
    <citation type="submission" date="2008-02" db="EMBL/GenBank/DDBJ databases">
        <title>Complete sequence of Haemophilus somnus 2336.</title>
        <authorList>
            <consortium name="US DOE Joint Genome Institute"/>
            <person name="Siddaramappa S."/>
            <person name="Duncan A.J."/>
            <person name="Challacombe J.F."/>
            <person name="Rainey D."/>
            <person name="Gillaspy A.F."/>
            <person name="Carson M."/>
            <person name="Gipson J."/>
            <person name="Gipson M."/>
            <person name="Bruce D."/>
            <person name="Detter J.C."/>
            <person name="Han C.S."/>
            <person name="Land M."/>
            <person name="Tapia R."/>
            <person name="Thompson L.S."/>
            <person name="Orvis J."/>
            <person name="Zaitshik J."/>
            <person name="Barnes G."/>
            <person name="Brettin T.S."/>
            <person name="Dyer D.W."/>
            <person name="Inzana T.J."/>
        </authorList>
    </citation>
    <scope>NUCLEOTIDE SEQUENCE [LARGE SCALE GENOMIC DNA]</scope>
    <source>
        <strain>2336</strain>
    </source>
</reference>
<gene>
    <name evidence="2" type="primary">infB</name>
    <name type="ordered locus">HSM_1290</name>
</gene>